<accession>Q2NQN9</accession>
<proteinExistence type="inferred from homology"/>
<name>RS5_SODGM</name>
<feature type="chain" id="PRO_1000086059" description="Small ribosomal subunit protein uS5">
    <location>
        <begin position="1"/>
        <end position="166"/>
    </location>
</feature>
<feature type="domain" description="S5 DRBM" evidence="1">
    <location>
        <begin position="11"/>
        <end position="74"/>
    </location>
</feature>
<comment type="function">
    <text evidence="1">With S4 and S12 plays an important role in translational accuracy.</text>
</comment>
<comment type="function">
    <text evidence="1">Located at the back of the 30S subunit body where it stabilizes the conformation of the head with respect to the body.</text>
</comment>
<comment type="subunit">
    <text evidence="1">Part of the 30S ribosomal subunit. Contacts proteins S4 and S8.</text>
</comment>
<comment type="domain">
    <text>The N-terminal domain interacts with the head of the 30S subunit; the C-terminal domain interacts with the body and contacts protein S4. The interaction surface between S4 and S5 is involved in control of translational fidelity.</text>
</comment>
<comment type="similarity">
    <text evidence="1">Belongs to the universal ribosomal protein uS5 family.</text>
</comment>
<organism>
    <name type="scientific">Sodalis glossinidius (strain morsitans)</name>
    <dbReference type="NCBI Taxonomy" id="343509"/>
    <lineage>
        <taxon>Bacteria</taxon>
        <taxon>Pseudomonadati</taxon>
        <taxon>Pseudomonadota</taxon>
        <taxon>Gammaproteobacteria</taxon>
        <taxon>Enterobacterales</taxon>
        <taxon>Bruguierivoracaceae</taxon>
        <taxon>Sodalis</taxon>
    </lineage>
</organism>
<protein>
    <recommendedName>
        <fullName evidence="1">Small ribosomal subunit protein uS5</fullName>
    </recommendedName>
    <alternativeName>
        <fullName evidence="2">30S ribosomal protein S5</fullName>
    </alternativeName>
</protein>
<gene>
    <name evidence="1" type="primary">rpsE</name>
    <name type="ordered locus">SG2261</name>
</gene>
<keyword id="KW-0687">Ribonucleoprotein</keyword>
<keyword id="KW-0689">Ribosomal protein</keyword>
<keyword id="KW-0694">RNA-binding</keyword>
<keyword id="KW-0699">rRNA-binding</keyword>
<sequence length="166" mass="17436">MAHIEKQAGELQEKLIAVNRVSKTVKGGRIFSFTALTVVGDGNGRVGFGYGKAREVPAAIQKAMEKARRNMMNVALNSGTLQHPIKGVHTGSRVFMQPASEGTGIIAGGAMRAVLEVAGVHNVLAKAYGSTNPINVVRATIDALGNMKSPEMVAAKRGKSVEEILG</sequence>
<evidence type="ECO:0000255" key="1">
    <source>
        <dbReference type="HAMAP-Rule" id="MF_01307"/>
    </source>
</evidence>
<evidence type="ECO:0000305" key="2"/>
<dbReference type="EMBL" id="AP008232">
    <property type="protein sequence ID" value="BAE75536.1"/>
    <property type="molecule type" value="Genomic_DNA"/>
</dbReference>
<dbReference type="RefSeq" id="WP_011412071.1">
    <property type="nucleotide sequence ID" value="NC_007712.1"/>
</dbReference>
<dbReference type="SMR" id="Q2NQN9"/>
<dbReference type="STRING" id="343509.SG2261"/>
<dbReference type="KEGG" id="sgl:SG2261"/>
<dbReference type="eggNOG" id="COG0098">
    <property type="taxonomic scope" value="Bacteria"/>
</dbReference>
<dbReference type="HOGENOM" id="CLU_065898_2_2_6"/>
<dbReference type="OrthoDB" id="9809045at2"/>
<dbReference type="BioCyc" id="SGLO343509:SGP1_RS20755-MONOMER"/>
<dbReference type="Proteomes" id="UP000001932">
    <property type="component" value="Chromosome"/>
</dbReference>
<dbReference type="GO" id="GO:0015935">
    <property type="term" value="C:small ribosomal subunit"/>
    <property type="evidence" value="ECO:0007669"/>
    <property type="project" value="InterPro"/>
</dbReference>
<dbReference type="GO" id="GO:0019843">
    <property type="term" value="F:rRNA binding"/>
    <property type="evidence" value="ECO:0007669"/>
    <property type="project" value="UniProtKB-UniRule"/>
</dbReference>
<dbReference type="GO" id="GO:0003735">
    <property type="term" value="F:structural constituent of ribosome"/>
    <property type="evidence" value="ECO:0007669"/>
    <property type="project" value="InterPro"/>
</dbReference>
<dbReference type="GO" id="GO:0006412">
    <property type="term" value="P:translation"/>
    <property type="evidence" value="ECO:0007669"/>
    <property type="project" value="UniProtKB-UniRule"/>
</dbReference>
<dbReference type="FunFam" id="3.30.160.20:FF:000001">
    <property type="entry name" value="30S ribosomal protein S5"/>
    <property type="match status" value="1"/>
</dbReference>
<dbReference type="FunFam" id="3.30.230.10:FF:000002">
    <property type="entry name" value="30S ribosomal protein S5"/>
    <property type="match status" value="1"/>
</dbReference>
<dbReference type="Gene3D" id="3.30.160.20">
    <property type="match status" value="1"/>
</dbReference>
<dbReference type="Gene3D" id="3.30.230.10">
    <property type="match status" value="1"/>
</dbReference>
<dbReference type="HAMAP" id="MF_01307_B">
    <property type="entry name" value="Ribosomal_uS5_B"/>
    <property type="match status" value="1"/>
</dbReference>
<dbReference type="InterPro" id="IPR020568">
    <property type="entry name" value="Ribosomal_Su5_D2-typ_SF"/>
</dbReference>
<dbReference type="InterPro" id="IPR000851">
    <property type="entry name" value="Ribosomal_uS5"/>
</dbReference>
<dbReference type="InterPro" id="IPR005712">
    <property type="entry name" value="Ribosomal_uS5_bac-type"/>
</dbReference>
<dbReference type="InterPro" id="IPR005324">
    <property type="entry name" value="Ribosomal_uS5_C"/>
</dbReference>
<dbReference type="InterPro" id="IPR013810">
    <property type="entry name" value="Ribosomal_uS5_N"/>
</dbReference>
<dbReference type="InterPro" id="IPR018192">
    <property type="entry name" value="Ribosomal_uS5_N_CS"/>
</dbReference>
<dbReference type="InterPro" id="IPR014721">
    <property type="entry name" value="Ribsml_uS5_D2-typ_fold_subgr"/>
</dbReference>
<dbReference type="NCBIfam" id="TIGR01021">
    <property type="entry name" value="rpsE_bact"/>
    <property type="match status" value="1"/>
</dbReference>
<dbReference type="PANTHER" id="PTHR48277">
    <property type="entry name" value="MITOCHONDRIAL RIBOSOMAL PROTEIN S5"/>
    <property type="match status" value="1"/>
</dbReference>
<dbReference type="PANTHER" id="PTHR48277:SF1">
    <property type="entry name" value="MITOCHONDRIAL RIBOSOMAL PROTEIN S5"/>
    <property type="match status" value="1"/>
</dbReference>
<dbReference type="Pfam" id="PF00333">
    <property type="entry name" value="Ribosomal_S5"/>
    <property type="match status" value="1"/>
</dbReference>
<dbReference type="Pfam" id="PF03719">
    <property type="entry name" value="Ribosomal_S5_C"/>
    <property type="match status" value="1"/>
</dbReference>
<dbReference type="SUPFAM" id="SSF54768">
    <property type="entry name" value="dsRNA-binding domain-like"/>
    <property type="match status" value="1"/>
</dbReference>
<dbReference type="SUPFAM" id="SSF54211">
    <property type="entry name" value="Ribosomal protein S5 domain 2-like"/>
    <property type="match status" value="1"/>
</dbReference>
<dbReference type="PROSITE" id="PS00585">
    <property type="entry name" value="RIBOSOMAL_S5"/>
    <property type="match status" value="1"/>
</dbReference>
<dbReference type="PROSITE" id="PS50881">
    <property type="entry name" value="S5_DSRBD"/>
    <property type="match status" value="1"/>
</dbReference>
<reference key="1">
    <citation type="journal article" date="2006" name="Genome Res.">
        <title>Massive genome erosion and functional adaptations provide insights into the symbiotic lifestyle of Sodalis glossinidius in the tsetse host.</title>
        <authorList>
            <person name="Toh H."/>
            <person name="Weiss B.L."/>
            <person name="Perkin S.A.H."/>
            <person name="Yamashita A."/>
            <person name="Oshima K."/>
            <person name="Hattori M."/>
            <person name="Aksoy S."/>
        </authorList>
    </citation>
    <scope>NUCLEOTIDE SEQUENCE [LARGE SCALE GENOMIC DNA]</scope>
    <source>
        <strain>morsitans</strain>
    </source>
</reference>